<evidence type="ECO:0000255" key="1">
    <source>
        <dbReference type="HAMAP-Rule" id="MF_01323"/>
    </source>
</evidence>
<evidence type="ECO:0000312" key="2">
    <source>
        <dbReference type="Proteomes" id="UP000006591"/>
    </source>
</evidence>
<gene>
    <name evidence="1" type="primary">rpoC1</name>
</gene>
<protein>
    <recommendedName>
        <fullName evidence="1">DNA-directed RNA polymerase subunit beta'</fullName>
        <ecNumber evidence="1">2.7.7.6</ecNumber>
    </recommendedName>
    <alternativeName>
        <fullName evidence="1">PEP</fullName>
    </alternativeName>
    <alternativeName>
        <fullName evidence="1">Plastid-encoded RNA polymerase subunit beta'</fullName>
        <shortName evidence="1">RNA polymerase subunit beta'</shortName>
    </alternativeName>
</protein>
<dbReference type="EC" id="2.7.7.6" evidence="1"/>
<dbReference type="EMBL" id="AP006728">
    <property type="protein sequence ID" value="BAD26769.1"/>
    <property type="molecule type" value="Genomic_DNA"/>
</dbReference>
<dbReference type="RefSeq" id="YP_052740.1">
    <property type="nucleotide sequence ID" value="NC_005973.1"/>
</dbReference>
<dbReference type="SMR" id="Q6ENI3"/>
<dbReference type="STRING" id="4536.Q6ENI3"/>
<dbReference type="GeneID" id="2885900"/>
<dbReference type="Proteomes" id="UP000006591">
    <property type="component" value="Chloroplast"/>
</dbReference>
<dbReference type="GO" id="GO:0009507">
    <property type="term" value="C:chloroplast"/>
    <property type="evidence" value="ECO:0007669"/>
    <property type="project" value="UniProtKB-SubCell"/>
</dbReference>
<dbReference type="GO" id="GO:0000428">
    <property type="term" value="C:DNA-directed RNA polymerase complex"/>
    <property type="evidence" value="ECO:0007669"/>
    <property type="project" value="UniProtKB-KW"/>
</dbReference>
<dbReference type="GO" id="GO:0005739">
    <property type="term" value="C:mitochondrion"/>
    <property type="evidence" value="ECO:0007669"/>
    <property type="project" value="GOC"/>
</dbReference>
<dbReference type="GO" id="GO:0009536">
    <property type="term" value="C:plastid"/>
    <property type="evidence" value="ECO:0000305"/>
    <property type="project" value="Gramene"/>
</dbReference>
<dbReference type="GO" id="GO:0003677">
    <property type="term" value="F:DNA binding"/>
    <property type="evidence" value="ECO:0007669"/>
    <property type="project" value="UniProtKB-UniRule"/>
</dbReference>
<dbReference type="GO" id="GO:0003899">
    <property type="term" value="F:DNA-directed RNA polymerase activity"/>
    <property type="evidence" value="ECO:0007669"/>
    <property type="project" value="UniProtKB-UniRule"/>
</dbReference>
<dbReference type="GO" id="GO:0000287">
    <property type="term" value="F:magnesium ion binding"/>
    <property type="evidence" value="ECO:0007669"/>
    <property type="project" value="UniProtKB-UniRule"/>
</dbReference>
<dbReference type="GO" id="GO:0008270">
    <property type="term" value="F:zinc ion binding"/>
    <property type="evidence" value="ECO:0007669"/>
    <property type="project" value="UniProtKB-UniRule"/>
</dbReference>
<dbReference type="GO" id="GO:0006351">
    <property type="term" value="P:DNA-templated transcription"/>
    <property type="evidence" value="ECO:0007669"/>
    <property type="project" value="UniProtKB-UniRule"/>
</dbReference>
<dbReference type="Gene3D" id="1.10.40.90">
    <property type="match status" value="1"/>
</dbReference>
<dbReference type="Gene3D" id="2.40.40.20">
    <property type="match status" value="1"/>
</dbReference>
<dbReference type="Gene3D" id="4.10.860.120">
    <property type="entry name" value="RNA polymerase II, clamp domain"/>
    <property type="match status" value="1"/>
</dbReference>
<dbReference type="Gene3D" id="1.10.274.100">
    <property type="entry name" value="RNA polymerase Rpb1, domain 3"/>
    <property type="match status" value="1"/>
</dbReference>
<dbReference type="HAMAP" id="MF_01323">
    <property type="entry name" value="RNApol_bact_RpoC1"/>
    <property type="match status" value="1"/>
</dbReference>
<dbReference type="InterPro" id="IPR045867">
    <property type="entry name" value="DNA-dir_RpoC_beta_prime"/>
</dbReference>
<dbReference type="InterPro" id="IPR000722">
    <property type="entry name" value="RNA_pol_asu"/>
</dbReference>
<dbReference type="InterPro" id="IPR006592">
    <property type="entry name" value="RNA_pol_N"/>
</dbReference>
<dbReference type="InterPro" id="IPR007080">
    <property type="entry name" value="RNA_pol_Rpb1_1"/>
</dbReference>
<dbReference type="InterPro" id="IPR042102">
    <property type="entry name" value="RNA_pol_Rpb1_3_sf"/>
</dbReference>
<dbReference type="InterPro" id="IPR044893">
    <property type="entry name" value="RNA_pol_Rpb1_clamp_domain"/>
</dbReference>
<dbReference type="InterPro" id="IPR034678">
    <property type="entry name" value="RNApol_RpoC1"/>
</dbReference>
<dbReference type="PANTHER" id="PTHR19376">
    <property type="entry name" value="DNA-DIRECTED RNA POLYMERASE"/>
    <property type="match status" value="1"/>
</dbReference>
<dbReference type="PANTHER" id="PTHR19376:SF54">
    <property type="entry name" value="DNA-DIRECTED RNA POLYMERASE SUBUNIT BETA"/>
    <property type="match status" value="1"/>
</dbReference>
<dbReference type="Pfam" id="PF04997">
    <property type="entry name" value="RNA_pol_Rpb1_1"/>
    <property type="match status" value="1"/>
</dbReference>
<dbReference type="Pfam" id="PF00623">
    <property type="entry name" value="RNA_pol_Rpb1_2"/>
    <property type="match status" value="2"/>
</dbReference>
<dbReference type="SMART" id="SM00663">
    <property type="entry name" value="RPOLA_N"/>
    <property type="match status" value="1"/>
</dbReference>
<dbReference type="SUPFAM" id="SSF64484">
    <property type="entry name" value="beta and beta-prime subunits of DNA dependent RNA-polymerase"/>
    <property type="match status" value="1"/>
</dbReference>
<keyword id="KW-0150">Chloroplast</keyword>
<keyword id="KW-0240">DNA-directed RNA polymerase</keyword>
<keyword id="KW-0460">Magnesium</keyword>
<keyword id="KW-0479">Metal-binding</keyword>
<keyword id="KW-0548">Nucleotidyltransferase</keyword>
<keyword id="KW-0934">Plastid</keyword>
<keyword id="KW-1185">Reference proteome</keyword>
<keyword id="KW-0804">Transcription</keyword>
<keyword id="KW-0808">Transferase</keyword>
<keyword id="KW-0862">Zinc</keyword>
<proteinExistence type="inferred from homology"/>
<feature type="chain" id="PRO_0000067886" description="DNA-directed RNA polymerase subunit beta'">
    <location>
        <begin position="1"/>
        <end position="682"/>
    </location>
</feature>
<feature type="binding site" evidence="1">
    <location>
        <position position="69"/>
    </location>
    <ligand>
        <name>Zn(2+)</name>
        <dbReference type="ChEBI" id="CHEBI:29105"/>
    </ligand>
</feature>
<feature type="binding site" evidence="1">
    <location>
        <position position="71"/>
    </location>
    <ligand>
        <name>Zn(2+)</name>
        <dbReference type="ChEBI" id="CHEBI:29105"/>
    </ligand>
</feature>
<feature type="binding site" evidence="1">
    <location>
        <position position="87"/>
    </location>
    <ligand>
        <name>Zn(2+)</name>
        <dbReference type="ChEBI" id="CHEBI:29105"/>
    </ligand>
</feature>
<feature type="binding site" evidence="1">
    <location>
        <position position="90"/>
    </location>
    <ligand>
        <name>Zn(2+)</name>
        <dbReference type="ChEBI" id="CHEBI:29105"/>
    </ligand>
</feature>
<feature type="binding site" evidence="1">
    <location>
        <position position="489"/>
    </location>
    <ligand>
        <name>Mg(2+)</name>
        <dbReference type="ChEBI" id="CHEBI:18420"/>
    </ligand>
</feature>
<feature type="binding site" evidence="1">
    <location>
        <position position="491"/>
    </location>
    <ligand>
        <name>Mg(2+)</name>
        <dbReference type="ChEBI" id="CHEBI:18420"/>
    </ligand>
</feature>
<feature type="binding site" evidence="1">
    <location>
        <position position="493"/>
    </location>
    <ligand>
        <name>Mg(2+)</name>
        <dbReference type="ChEBI" id="CHEBI:18420"/>
    </ligand>
</feature>
<organism>
    <name type="scientific">Oryza nivara</name>
    <name type="common">Indian wild rice</name>
    <name type="synonym">Oryza sativa f. spontanea</name>
    <dbReference type="NCBI Taxonomy" id="4536"/>
    <lineage>
        <taxon>Eukaryota</taxon>
        <taxon>Viridiplantae</taxon>
        <taxon>Streptophyta</taxon>
        <taxon>Embryophyta</taxon>
        <taxon>Tracheophyta</taxon>
        <taxon>Spermatophyta</taxon>
        <taxon>Magnoliopsida</taxon>
        <taxon>Liliopsida</taxon>
        <taxon>Poales</taxon>
        <taxon>Poaceae</taxon>
        <taxon>BOP clade</taxon>
        <taxon>Oryzoideae</taxon>
        <taxon>Oryzeae</taxon>
        <taxon>Oryzinae</taxon>
        <taxon>Oryza</taxon>
    </lineage>
</organism>
<reference key="1">
    <citation type="journal article" date="2004" name="Gene">
        <title>The complete nucleotide sequence of wild rice (Oryza nivara) chloroplast genome: first genome wide comparative sequence analysis of wild and cultivated rice.</title>
        <authorList>
            <person name="Masood M.S."/>
            <person name="Nishikawa T."/>
            <person name="Fukuoka S."/>
            <person name="Njenga P.K."/>
            <person name="Tsudzuki T."/>
            <person name="Kadowaki K."/>
        </authorList>
    </citation>
    <scope>NUCLEOTIDE SEQUENCE [LARGE SCALE GENOMIC DNA]</scope>
    <source>
        <strain evidence="2">cv. SL10</strain>
    </source>
</reference>
<comment type="function">
    <text evidence="1">DNA-dependent RNA polymerase catalyzes the transcription of DNA into RNA using the four ribonucleoside triphosphates as substrates.</text>
</comment>
<comment type="catalytic activity">
    <reaction evidence="1">
        <text>RNA(n) + a ribonucleoside 5'-triphosphate = RNA(n+1) + diphosphate</text>
        <dbReference type="Rhea" id="RHEA:21248"/>
        <dbReference type="Rhea" id="RHEA-COMP:14527"/>
        <dbReference type="Rhea" id="RHEA-COMP:17342"/>
        <dbReference type="ChEBI" id="CHEBI:33019"/>
        <dbReference type="ChEBI" id="CHEBI:61557"/>
        <dbReference type="ChEBI" id="CHEBI:140395"/>
        <dbReference type="EC" id="2.7.7.6"/>
    </reaction>
</comment>
<comment type="cofactor">
    <cofactor evidence="1">
        <name>Mg(2+)</name>
        <dbReference type="ChEBI" id="CHEBI:18420"/>
    </cofactor>
    <text evidence="1">Binds 1 Mg(2+) ion per subunit.</text>
</comment>
<comment type="cofactor">
    <cofactor evidence="1">
        <name>Zn(2+)</name>
        <dbReference type="ChEBI" id="CHEBI:29105"/>
    </cofactor>
    <text evidence="1">Binds 1 Zn(2+) ion per subunit.</text>
</comment>
<comment type="subunit">
    <text evidence="1">In plastids the minimal PEP RNA polymerase catalytic core is composed of four subunits: alpha, beta, beta', and beta''. When a (nuclear-encoded) sigma factor is associated with the core the holoenzyme is formed, which can initiate transcription.</text>
</comment>
<comment type="subcellular location">
    <subcellularLocation>
        <location evidence="1">Plastid</location>
        <location evidence="1">Chloroplast</location>
    </subcellularLocation>
</comment>
<comment type="similarity">
    <text evidence="1">Belongs to the RNA polymerase beta' chain family. RpoC1 subfamily.</text>
</comment>
<sequence>MIDQYKHQQLQIGLVSPQQIKAWANKTLPNGEVVGEVTRPSTFHYKTDKPEKDGLFCERIFGPIKSRICACGNSRASGAENEDERFCQKCGVEFVDSRIRRYQMGYIKLACPVTHVWYLKGLPSYIANLLDKPLKKLEGLVYGDFSFARPSAKKPTFLRLRGLFEDEISSCNHSISPFFSTPGFTTFRNREIATGAGAIREQLADLDLRIILENSSVEWKELEDEGYSGDEWEDRKRRIRKVFLIRRMQLAKHFIQTNVEPEWMVLCLLPVLPPELRPIVYRSGDKVVTSDINELYKRVIRRNNNLAYLLKRSELAPADLVMCQEKLVQEAVDTLLDSGSRGQPTRDGHNKVYKSLSDVIEGKEGRFRETLLGKRVDYSGRSVIVVGPSLSLHQCGLPLEIAIKLFQLFVIRDLITKRATSNVRIAKRKIWEKEPIVWEILQEVMRGHPVLLNRAPTLHRLGIQAFQPTLVEGRTICLHPLVCKGFNADFDGDQMAVHLPLSLEAQAEARLLMFSHMNLLSPAIGDPICVPTQDMLIGLYVLTIGNRRGICANRYNSCGNYPNQKVNYNNNNPKYTKDKESLFSSSYDALGAYRQKQICLDSPLWLRWKLDQRVIGLREVPIEVQYESLGTYREIYAHYLVVGNRKKEIRSIYIRTTLGHISFYREIEEAIQGFSQAYSYTI</sequence>
<accession>Q6ENI3</accession>
<name>RPOC1_ORYNI</name>
<geneLocation type="chloroplast"/>